<reference key="1">
    <citation type="journal article" date="1990" name="J. Virol.">
        <title>Molecular characterization of an attenuated human immunodeficiency virus type 2 isolate.</title>
        <authorList>
            <person name="Kumar P."/>
            <person name="Hui H."/>
            <person name="Kappes J.C."/>
            <person name="Haggarty B.S."/>
            <person name="Hoxie J.A."/>
            <person name="Arya S.K."/>
            <person name="Shaw G.M."/>
            <person name="Hahn B.H."/>
        </authorList>
    </citation>
    <scope>NUCLEOTIDE SEQUENCE [GENOMIC DNA]</scope>
</reference>
<reference key="2">
    <citation type="journal article" date="2002" name="J. Gen. Virol.">
        <title>Human immunodeficiency virus type 2.</title>
        <authorList>
            <person name="Reeves J.D."/>
            <person name="Doms R.W."/>
        </authorList>
    </citation>
    <scope>REVIEW</scope>
</reference>
<sequence length="859" mass="99070">MCGRNQLFVASLLASACLIYCVQYVTVFYGVPVWRNASIPLFCATKNRDTWGTIQCLPDNDDYQEIALNVTEAFDAWNNTVTEQAVEDVWSLFETSIKPCVKLTPLCVAMRCNSTTAKNTTSTPTTTTTANTTIGENSSCIRTDNCTGLGEEEMVDCQFNMTGLERDKKKLYNETWYSKDVVCESNDTKKEKTCYMNHCNTSVITESCDKHYWDTMRFRYCAPPGFALLRCNDTNYSGFEPNCSKVVAATCTRMMETQTSTWFGFNGTRAENRTYIYWHGRDNRTIISLNKFYNLTVHCKRPGNKTVVPITLMSGLVFHSQPINRRPRQAWCWFKGEWKEAMKEVKLTLAKHPRYKGTNDTEKIRFIAPGERSDPEVAYMWTNCRGEFLYCNMTWFLNWVENRTNQTQHNYVPCHIKQIINTWHKVGKNVYLPPREGQLTCNSTVTSIIANIDGGENQTNITFSAEVAELYRLELGDYKLIEVTPIGFAPTPVKRYSSAPVRNKRGVFVLGFLGFLTTAGAAMGAASLTLSAQSRTLLAGIVQQQQQLLDVVKRQQEMLRLTVWGTKNLQARVTAIEKYLKDQAQLNSWGCAFRQVCHTTVPWVNDTLTPDWNNMTWQEWEQRIRNLEANISESLEQAQIQQEKNMYELQKLNSWDVFGNWFDLTSWIKYIQYGVYIVVGIIVLRIVIYVVQMLSRLRKGYRPVFSSPPAYFQQIHIHKDREQPAREETEEDVGNSVGDNWWPWPIRYIHFLIRQLIRLLNRLYNICRDLLSRSFQTLQLISQSLRRALTAVRDWLRFNTAYLQYGGEWIQEAFRAFARATGETLTNAWRGFWGTLGQIGRGILAVPRRIRQGAEIALL</sequence>
<gene>
    <name type="primary">env</name>
</gene>
<proteinExistence type="evidence at protein level"/>
<name>ENV_HV2ST</name>
<keyword id="KW-0002">3D-structure</keyword>
<keyword id="KW-0014">AIDS</keyword>
<keyword id="KW-0053">Apoptosis</keyword>
<keyword id="KW-1165">Clathrin-mediated endocytosis of virus by host</keyword>
<keyword id="KW-0165">Cleavage on pair of basic residues</keyword>
<keyword id="KW-0175">Coiled coil</keyword>
<keyword id="KW-1015">Disulfide bond</keyword>
<keyword id="KW-1170">Fusion of virus membrane with host endosomal membrane</keyword>
<keyword id="KW-1168">Fusion of virus membrane with host membrane</keyword>
<keyword id="KW-0325">Glycoprotein</keyword>
<keyword id="KW-1032">Host cell membrane</keyword>
<keyword id="KW-1039">Host endosome</keyword>
<keyword id="KW-1043">Host membrane</keyword>
<keyword id="KW-0945">Host-virus interaction</keyword>
<keyword id="KW-1090">Inhibition of host innate immune response by virus</keyword>
<keyword id="KW-1084">Inhibition of host tetherin by virus</keyword>
<keyword id="KW-0449">Lipoprotein</keyword>
<keyword id="KW-0472">Membrane</keyword>
<keyword id="KW-0564">Palmitate</keyword>
<keyword id="KW-0732">Signal</keyword>
<keyword id="KW-0812">Transmembrane</keyword>
<keyword id="KW-1133">Transmembrane helix</keyword>
<keyword id="KW-1161">Viral attachment to host cell</keyword>
<keyword id="KW-0261">Viral envelope protein</keyword>
<keyword id="KW-0899">Viral immunoevasion</keyword>
<keyword id="KW-1162">Viral penetration into host cytoplasm</keyword>
<keyword id="KW-0946">Virion</keyword>
<keyword id="KW-1164">Virus endocytosis by host</keyword>
<keyword id="KW-1160">Virus entry into host cell</keyword>
<comment type="function">
    <text evidence="1">The surface protein gp120 (SU) attaches the virus to the host lymphoid cell by binding to the primary receptor CD4. This interaction induces a structural rearrangement creating a high affinity binding site for a chemokine coreceptor like CXCR4 and/or CCR5. This peculiar 2 stage receptor-interaction strategy allows gp120 to maintain the highly conserved coreceptor-binding site in a cryptic conformation, protected from neutralizing antibodies. Since CD4 also displays a binding site for the disulfide-isomerase P4HB/PDI, a P4HB/PDI-CD4-CXCR4-gp120 complex may form. In that complex, P4HB/PDI could reach and reduce gp120 disulfide bonds, causing major conformational changes in gp120. TXN, another PDI family member could also be involved in disulfide rearrangements in Env during fusion. These changes are transmitted to the transmembrane protein gp41 and are thought to activate its fusogenic potential by unmasking its fusion peptide (By similarity).</text>
</comment>
<comment type="function">
    <text evidence="1">The surface protein gp120 is a ligand for CD209/DC-SIGN and CLEC4M/DC-SIGNR, which are respectively found on dendritic cells (DCs), and on endothelial cells of liver sinusoids and lymph node sinuses. These interactions allow capture of viral particles at mucosal surfaces by these cells and subsequent transmission to permissive cells. DCs are professional antigen presenting cells, critical for host immunity by inducing specific immune responses against a broad variety of pathogens. They act as sentinels in various tissues where they take up antigen, process it, and present it to T-cells following migration to lymphoid organs. HIV subverts the migration properties of dendritic cells to gain access to CD4+ T-cells in lymph nodes. Virus transmission to permissive T-cells occurs either in trans (without DCs infection, through viral capture and transmission), or in cis (following DCs productive infection, through the usual CD4-gp120 interaction), thereby inducing a robust infection. In trans infection, bound virions remain infectious over days and it is proposed that they are not degraded, but protected in non-lysosomal acidic organelles within the DCs close to the cell membrane thus contributing to the viral infectious potential during DCs' migration from the periphery to the lymphoid tissues. On arrival at lymphoid tissues, intact virions recycle back to DCs' cell surface allowing virus transmission to CD4+ T-cells. Virion capture also seems to lead to MHC-II-restricted viral antigen presentation, and probably to the activation of HIV-specific CD4+ cells (By similarity).</text>
</comment>
<comment type="function">
    <text evidence="1">The transmembrane protein gp41 (TM) acts as a class I viral fusion protein. Under the current model, the protein has at least 3 conformational states: pre-fusion native state, pre-hairpin intermediate state, and post-fusion hairpin state. During fusion of viral and target intracellular membranes, the coiled coil regions (heptad repeats) assume a trimer-of-hairpins structure, positioning the fusion peptide in close proximity to the C-terminal region of the ectodomain. The formation of this structure appears to drive apposition and subsequent fusion of viral and target cell membranes. Complete fusion occurs in host cell endosomes and is dynamin-dependent, however some lipid transfer might occur at the plasma membrane. The virus undergoes clathrin-dependent internalization long before endosomal fusion, thus minimizing the surface exposure of conserved viral epitopes during fusion and reducing the efficacy of inhibitors targeting these epitopes. Membranes fusion leads to delivery of the nucleocapsid into the cytoplasm (By similarity).</text>
</comment>
<comment type="function">
    <text evidence="1">The envelope glycoprotein gp160 precursor down-modulates cell surface CD4 antigen by interacting with it in the endoplasmic reticulum and blocking its transport to the cell surface.</text>
</comment>
<comment type="function">
    <text evidence="1">The gp120-gp41 heterodimer seems to contribute to T-cell depletion during HIV-1 infection. The envelope glycoproteins expressed on the surface of infected cells induce apoptosis through an interaction with uninfected cells expressing the receptor (CD4) and the coreceptors CXCR4 or CCR5. This type of bystander killing may be obtained by at least three distinct mechanisms. First, the interaction between the 2 cells can induce cellular fusion followed by nuclear fusion within the syncytium. Syncytia are condemned to die from apoptosis. Second, the 2 interacting cells may not fuse entirely and simply exchange plasma membrane lipids, after a sort of hemifusion process, followed by rapid death. Third, it is possible that virus-infected cells, on the point of undergoing apoptosis, fuse with CD4-expressing cells, in which case apoptosis is rapidly transmitted from one cell to the other and thus occurs in a sort of contagious fashion (By similarity).</text>
</comment>
<comment type="function">
    <text evidence="1">The gp120-gp41 heterodimer allows rapid transcytosis of the virus through CD4 negative cells such as simple epithelial monolayers of the intestinal, rectal and endocervical epithelial barriers. Both gp120 and gp41 specifically recognize glycosphingolipids galactosyl-ceramide (GalCer) or 3' sulfo-galactosyl-ceramide (GalS) present in the lipid rafts structures of epithelial cells. Binding to these alternative receptors allows the rapid transcytosis of the virus through the epithelial cells. This transcytotic vesicle-mediated transport of virions from the apical side to the basolateral side of the epithelial cells does not involve infection of the cells themselves (By similarity).</text>
</comment>
<comment type="subunit">
    <molecule>Surface protein gp120</molecule>
    <text evidence="1">The mature envelope protein (Env) consists of a homotrimer of non-covalently associated gp120-gp41 heterodimers. The resulting complex protrudes from the virus surface as a spike. There seems to be as few as 10 spikes on the average virion. Interacts with human CD4, CCR5 and CXCR4, to form a P4HB/PDI-CD4-CXCR4-gp120 complex. Gp120 also interacts with the C-type lectins CD209/DC-SIGN and CLEC4M/DC-SIGNR (collectively referred to as DC-SIGN(R)). Gp120 and gp41 interact with GalCer (By similarity).</text>
</comment>
<comment type="subunit">
    <molecule>Transmembrane protein gp41</molecule>
    <text evidence="1">The mature envelope protein (Env) consists of a homotrimer of non-covalently associated gp120-gp41 heterodimers. The resulting complex protrudes from the virus surface as a spike. There seems to be as few as 10 spikes on the average virion.</text>
</comment>
<comment type="subcellular location">
    <molecule>Transmembrane protein gp41</molecule>
    <subcellularLocation>
        <location evidence="1">Virion membrane</location>
        <topology evidence="1">Single-pass type I membrane protein</topology>
    </subcellularLocation>
    <subcellularLocation>
        <location evidence="1">Host cell membrane</location>
        <topology evidence="1">Single-pass type I membrane protein</topology>
    </subcellularLocation>
    <subcellularLocation>
        <location evidence="3">Host endosome membrane</location>
        <topology evidence="3">Single-pass type I membrane protein</topology>
    </subcellularLocation>
    <text evidence="1">It is probably concentrated at the site of budding and incorporated into the virions possibly by contacts between the cytoplasmic tail of Env and the N-terminus of Gag.</text>
</comment>
<comment type="subcellular location">
    <molecule>Surface protein gp120</molecule>
    <subcellularLocation>
        <location evidence="1">Virion membrane</location>
        <topology evidence="1">Peripheral membrane protein</topology>
    </subcellularLocation>
    <subcellularLocation>
        <location evidence="1">Host cell membrane</location>
        <topology evidence="1">Peripheral membrane protein</topology>
    </subcellularLocation>
    <subcellularLocation>
        <location evidence="3">Host endosome membrane</location>
        <topology evidence="3">Peripheral membrane protein</topology>
    </subcellularLocation>
    <text evidence="1">The surface protein is not anchored to the viral envelope, but associates with the extravirion surface through its binding to TM. It is probably concentrated at the site of budding and incorporated into the virions possibly by contacts between the cytoplasmic tail of Env and the N-terminus of Gag (By similarity).</text>
</comment>
<comment type="domain">
    <text evidence="1">Some of the most genetically diverse regions of the viral genome are present in Env. They are called variable regions 1 through 5 (V1 through V5). Coreceptor usage of gp120 is determined mainly by the primary structure of the third variable region (V3) in the outer domain of gp120. Binding to CCR5 involves a region adjacent in addition to V3 (By similarity).</text>
</comment>
<comment type="domain">
    <text evidence="1">The 17 amino acids long immunosuppressive region is present in many retroviral envelope proteins. Synthetic peptides derived from this relatively conserved sequence inhibit immune function in vitro and in vivo (By similarity).</text>
</comment>
<comment type="PTM">
    <text evidence="1">Specific enzymatic cleavages in vivo yield mature proteins. Envelope glycoproteins are synthesized as an inactive precursor that is heavily N-glycosylated and processed likely by host cell furin in the Golgi to yield the mature SU and TM proteins. The cleavage site between SU and TM requires the minimal sequence [KR]-X-[KR]-R (By similarity).</text>
</comment>
<comment type="PTM">
    <text evidence="1">Palmitoylation of the transmembrane protein and of Env polyprotein (prior to its proteolytic cleavage) is essential for their association with host cell membrane lipid rafts. Palmitoylation is therefore required for envelope trafficking to classical lipid rafts, but not for viral replication (By similarity).</text>
</comment>
<comment type="miscellaneous">
    <text>Some HIV-2 isolates have been described that can infect cells independently of CD4, using CXCR4 as primary receptor. These isolates may have an exposed coreceptor binding site.</text>
</comment>
<protein>
    <recommendedName>
        <fullName>Envelope glycoprotein gp160</fullName>
    </recommendedName>
    <alternativeName>
        <fullName>Env polyprotein</fullName>
    </alternativeName>
    <component>
        <recommendedName>
            <fullName>Surface protein gp120</fullName>
            <shortName>SU</shortName>
        </recommendedName>
        <alternativeName>
            <fullName>Glycoprotein 120</fullName>
            <shortName>gp120</shortName>
        </alternativeName>
    </component>
    <component>
        <recommendedName>
            <fullName>Transmembrane protein gp41</fullName>
            <shortName>TM</shortName>
        </recommendedName>
        <alternativeName>
            <fullName>Glycoprotein 41</fullName>
            <shortName>gp41</shortName>
        </alternativeName>
    </component>
</protein>
<evidence type="ECO:0000250" key="1"/>
<evidence type="ECO:0000255" key="2"/>
<evidence type="ECO:0000305" key="3"/>
<evidence type="ECO:0007829" key="4">
    <source>
        <dbReference type="PDB" id="5CAY"/>
    </source>
</evidence>
<organismHost>
    <name type="scientific">Homo sapiens</name>
    <name type="common">Human</name>
    <dbReference type="NCBI Taxonomy" id="9606"/>
</organismHost>
<dbReference type="EMBL" id="M31113">
    <property type="protein sequence ID" value="AAB01358.1"/>
    <property type="molecule type" value="Genomic_DNA"/>
</dbReference>
<dbReference type="PDB" id="5CAY">
    <property type="method" value="X-ray"/>
    <property type="resolution" value="3.00 A"/>
    <property type="chains" value="G=33-486"/>
</dbReference>
<dbReference type="PDBsum" id="5CAY"/>
<dbReference type="SMR" id="P20872"/>
<dbReference type="GlyCosmos" id="P20872">
    <property type="glycosylation" value="30 sites, No reported glycans"/>
</dbReference>
<dbReference type="EvolutionaryTrace" id="P20872"/>
<dbReference type="Proteomes" id="UP000007713">
    <property type="component" value="Segment"/>
</dbReference>
<dbReference type="GO" id="GO:0044175">
    <property type="term" value="C:host cell endosome membrane"/>
    <property type="evidence" value="ECO:0007669"/>
    <property type="project" value="UniProtKB-SubCell"/>
</dbReference>
<dbReference type="GO" id="GO:0020002">
    <property type="term" value="C:host cell plasma membrane"/>
    <property type="evidence" value="ECO:0007669"/>
    <property type="project" value="UniProtKB-SubCell"/>
</dbReference>
<dbReference type="GO" id="GO:0016020">
    <property type="term" value="C:membrane"/>
    <property type="evidence" value="ECO:0007669"/>
    <property type="project" value="UniProtKB-KW"/>
</dbReference>
<dbReference type="GO" id="GO:0019031">
    <property type="term" value="C:viral envelope"/>
    <property type="evidence" value="ECO:0007669"/>
    <property type="project" value="UniProtKB-KW"/>
</dbReference>
<dbReference type="GO" id="GO:0055036">
    <property type="term" value="C:virion membrane"/>
    <property type="evidence" value="ECO:0007669"/>
    <property type="project" value="UniProtKB-SubCell"/>
</dbReference>
<dbReference type="GO" id="GO:0005198">
    <property type="term" value="F:structural molecule activity"/>
    <property type="evidence" value="ECO:0007669"/>
    <property type="project" value="InterPro"/>
</dbReference>
<dbReference type="GO" id="GO:0075512">
    <property type="term" value="P:clathrin-dependent endocytosis of virus by host cell"/>
    <property type="evidence" value="ECO:0007669"/>
    <property type="project" value="UniProtKB-KW"/>
</dbReference>
<dbReference type="GO" id="GO:0039654">
    <property type="term" value="P:fusion of virus membrane with host endosome membrane"/>
    <property type="evidence" value="ECO:0007669"/>
    <property type="project" value="UniProtKB-KW"/>
</dbReference>
<dbReference type="GO" id="GO:0052170">
    <property type="term" value="P:symbiont-mediated suppression of host innate immune response"/>
    <property type="evidence" value="ECO:0007669"/>
    <property type="project" value="UniProtKB-KW"/>
</dbReference>
<dbReference type="GO" id="GO:0039587">
    <property type="term" value="P:symbiont-mediated-mediated suppression of host tetherin activity"/>
    <property type="evidence" value="ECO:0007669"/>
    <property type="project" value="UniProtKB-KW"/>
</dbReference>
<dbReference type="GO" id="GO:0019062">
    <property type="term" value="P:virion attachment to host cell"/>
    <property type="evidence" value="ECO:0007669"/>
    <property type="project" value="UniProtKB-KW"/>
</dbReference>
<dbReference type="CDD" id="cd09909">
    <property type="entry name" value="HIV-1-like_HR1-HR2"/>
    <property type="match status" value="1"/>
</dbReference>
<dbReference type="Gene3D" id="1.10.287.210">
    <property type="match status" value="1"/>
</dbReference>
<dbReference type="Gene3D" id="2.170.40.20">
    <property type="entry name" value="Human immunodeficiency virus 1, Gp160, envelope glycoprotein"/>
    <property type="match status" value="2"/>
</dbReference>
<dbReference type="InterPro" id="IPR036377">
    <property type="entry name" value="Gp120_core_sf"/>
</dbReference>
<dbReference type="InterPro" id="IPR000328">
    <property type="entry name" value="GP41-like"/>
</dbReference>
<dbReference type="InterPro" id="IPR000777">
    <property type="entry name" value="HIV1_Gp120"/>
</dbReference>
<dbReference type="Pfam" id="PF00516">
    <property type="entry name" value="GP120"/>
    <property type="match status" value="1"/>
</dbReference>
<dbReference type="Pfam" id="PF00517">
    <property type="entry name" value="GP41"/>
    <property type="match status" value="1"/>
</dbReference>
<dbReference type="SUPFAM" id="SSF56502">
    <property type="entry name" value="gp120 core"/>
    <property type="match status" value="1"/>
</dbReference>
<dbReference type="SUPFAM" id="SSF58069">
    <property type="entry name" value="Virus ectodomain"/>
    <property type="match status" value="1"/>
</dbReference>
<accession>P20872</accession>
<organism>
    <name type="scientific">Human immunodeficiency virus type 2 subtype A (isolate ST)</name>
    <name type="common">HIV-2</name>
    <dbReference type="NCBI Taxonomy" id="11721"/>
    <lineage>
        <taxon>Viruses</taxon>
        <taxon>Riboviria</taxon>
        <taxon>Pararnavirae</taxon>
        <taxon>Artverviricota</taxon>
        <taxon>Revtraviricetes</taxon>
        <taxon>Ortervirales</taxon>
        <taxon>Retroviridae</taxon>
        <taxon>Orthoretrovirinae</taxon>
        <taxon>Lentivirus</taxon>
        <taxon>Human immunodeficiency virus 2</taxon>
    </lineage>
</organism>
<feature type="signal peptide" evidence="2">
    <location>
        <begin position="1"/>
        <end position="24"/>
    </location>
</feature>
<feature type="chain" id="PRO_0000239504" description="Envelope glycoprotein gp160">
    <location>
        <begin position="25"/>
        <end position="859"/>
    </location>
</feature>
<feature type="chain" id="PRO_0000038451" description="Surface protein gp120" evidence="1">
    <location>
        <begin position="25"/>
        <end position="505"/>
    </location>
</feature>
<feature type="chain" id="PRO_0000038452" description="Transmembrane protein gp41" evidence="1">
    <location>
        <begin position="506"/>
        <end position="859"/>
    </location>
</feature>
<feature type="topological domain" description="Extracellular" evidence="2">
    <location>
        <begin position="25"/>
        <end position="673"/>
    </location>
</feature>
<feature type="transmembrane region" description="Helical" evidence="2">
    <location>
        <begin position="674"/>
        <end position="694"/>
    </location>
</feature>
<feature type="topological domain" description="Cytoplasmic" evidence="2">
    <location>
        <begin position="695"/>
        <end position="859"/>
    </location>
</feature>
<feature type="region of interest" description="V1">
    <location>
        <begin position="112"/>
        <end position="156"/>
    </location>
</feature>
<feature type="region of interest" description="V2">
    <location>
        <begin position="157"/>
        <end position="199"/>
    </location>
</feature>
<feature type="region of interest" description="V3">
    <location>
        <begin position="299"/>
        <end position="331"/>
    </location>
</feature>
<feature type="region of interest" description="V4">
    <location>
        <begin position="391"/>
        <end position="414"/>
    </location>
</feature>
<feature type="region of interest" description="V5">
    <location>
        <begin position="457"/>
        <end position="463"/>
    </location>
</feature>
<feature type="region of interest" description="Fusion peptide" evidence="2">
    <location>
        <begin position="506"/>
        <end position="526"/>
    </location>
</feature>
<feature type="region of interest" description="Immunosuppression" evidence="1">
    <location>
        <begin position="569"/>
        <end position="585"/>
    </location>
</feature>
<feature type="region of interest" description="MPER; binding to GalCer" evidence="1">
    <location>
        <begin position="651"/>
        <end position="672"/>
    </location>
</feature>
<feature type="coiled-coil region" evidence="2">
    <location>
        <begin position="614"/>
        <end position="646"/>
    </location>
</feature>
<feature type="short sequence motif" description="YXXV motif; contains endocytosis signal" evidence="1">
    <location>
        <begin position="701"/>
        <end position="704"/>
    </location>
</feature>
<feature type="short sequence motif" description="Di-leucine internalization motif" evidence="1">
    <location>
        <begin position="858"/>
        <end position="859"/>
    </location>
</feature>
<feature type="site" description="Cleavage; by host furin" evidence="2">
    <location>
        <begin position="505"/>
        <end position="506"/>
    </location>
</feature>
<feature type="lipid moiety-binding region" description="S-palmitoyl cysteine; by host" evidence="1">
    <location>
        <position position="767"/>
    </location>
</feature>
<feature type="glycosylation site" description="N-linked (GlcNAc...) asparagine; by host" evidence="2">
    <location>
        <position position="36"/>
    </location>
</feature>
<feature type="glycosylation site" description="N-linked (GlcNAc...) asparagine; by host" evidence="2">
    <location>
        <position position="69"/>
    </location>
</feature>
<feature type="glycosylation site" description="N-linked (GlcNAc...) asparagine; by host" evidence="2">
    <location>
        <position position="78"/>
    </location>
</feature>
<feature type="glycosylation site" description="N-linked (GlcNAc...) asparagine; by host" evidence="2">
    <location>
        <position position="113"/>
    </location>
</feature>
<feature type="glycosylation site" description="N-linked (GlcNAc...) asparagine; by host" evidence="2">
    <location>
        <position position="119"/>
    </location>
</feature>
<feature type="glycosylation site" description="N-linked (GlcNAc...) asparagine; by host" evidence="2">
    <location>
        <position position="131"/>
    </location>
</feature>
<feature type="glycosylation site" description="N-linked (GlcNAc...) asparagine; by host" evidence="2">
    <location>
        <position position="137"/>
    </location>
</feature>
<feature type="glycosylation site" description="N-linked (GlcNAc...) asparagine; by host" evidence="2">
    <location>
        <position position="145"/>
    </location>
</feature>
<feature type="glycosylation site" description="N-linked (GlcNAc...) asparagine; by host" evidence="2">
    <location>
        <position position="160"/>
    </location>
</feature>
<feature type="glycosylation site" description="N-linked (GlcNAc...) asparagine; by host" evidence="2">
    <location>
        <position position="173"/>
    </location>
</feature>
<feature type="glycosylation site" description="N-linked (GlcNAc...) asparagine; by host" evidence="2">
    <location>
        <position position="186"/>
    </location>
</feature>
<feature type="glycosylation site" description="N-linked (GlcNAc...) asparagine; by host" evidence="2">
    <location>
        <position position="200"/>
    </location>
</feature>
<feature type="glycosylation site" description="N-linked (GlcNAc...) asparagine; by host" evidence="2">
    <location>
        <position position="232"/>
    </location>
</feature>
<feature type="glycosylation site" description="N-linked (GlcNAc...) asparagine; by host" evidence="2">
    <location>
        <position position="235"/>
    </location>
</feature>
<feature type="glycosylation site" description="N-linked (GlcNAc...) asparagine; by host" evidence="2">
    <location>
        <position position="242"/>
    </location>
</feature>
<feature type="glycosylation site" description="N-linked (GlcNAc...) asparagine; by host" evidence="2">
    <location>
        <position position="266"/>
    </location>
</feature>
<feature type="glycosylation site" description="N-linked (GlcNAc...) asparagine; by host" evidence="2">
    <location>
        <position position="272"/>
    </location>
</feature>
<feature type="glycosylation site" description="N-linked (GlcNAc...) asparagine; by host" evidence="2">
    <location>
        <position position="283"/>
    </location>
</feature>
<feature type="glycosylation site" description="N-linked (GlcNAc...) asparagine; by host" evidence="2">
    <location>
        <position position="294"/>
    </location>
</feature>
<feature type="glycosylation site" description="N-linked (GlcNAc...) asparagine; by host" evidence="2">
    <location>
        <position position="304"/>
    </location>
</feature>
<feature type="glycosylation site" description="N-linked (GlcNAc...) asparagine; by host" evidence="2">
    <location>
        <position position="359"/>
    </location>
</feature>
<feature type="glycosylation site" description="N-linked (GlcNAc...) asparagine; by host" evidence="2">
    <location>
        <position position="392"/>
    </location>
</feature>
<feature type="glycosylation site" description="N-linked (GlcNAc...) asparagine; by host" evidence="2">
    <location>
        <position position="402"/>
    </location>
</feature>
<feature type="glycosylation site" description="N-linked (GlcNAc...) asparagine; by host" evidence="2">
    <location>
        <position position="405"/>
    </location>
</feature>
<feature type="glycosylation site" description="N-linked (GlcNAc...) asparagine; by host" evidence="2">
    <location>
        <position position="442"/>
    </location>
</feature>
<feature type="glycosylation site" description="N-linked (GlcNAc...) asparagine; by host" evidence="2">
    <location>
        <position position="457"/>
    </location>
</feature>
<feature type="glycosylation site" description="N-linked (GlcNAc...) asparagine; by host" evidence="2">
    <location>
        <position position="460"/>
    </location>
</feature>
<feature type="glycosylation site" description="N-linked (GlcNAc...) asparagine; by host" evidence="2">
    <location>
        <position position="605"/>
    </location>
</feature>
<feature type="glycosylation site" description="N-linked (GlcNAc...) asparagine; by host" evidence="2">
    <location>
        <position position="614"/>
    </location>
</feature>
<feature type="glycosylation site" description="N-linked (GlcNAc...) asparagine; by host" evidence="2">
    <location>
        <position position="630"/>
    </location>
</feature>
<feature type="disulfide bond" evidence="1">
    <location>
        <begin position="43"/>
        <end position="56"/>
    </location>
</feature>
<feature type="disulfide bond" evidence="1">
    <location>
        <begin position="100"/>
        <end position="208"/>
    </location>
</feature>
<feature type="disulfide bond" evidence="1">
    <location>
        <begin position="107"/>
        <end position="199"/>
    </location>
</feature>
<feature type="disulfide bond" evidence="1">
    <location>
        <begin position="112"/>
        <end position="157"/>
    </location>
</feature>
<feature type="disulfide bond" evidence="1">
    <location>
        <begin position="221"/>
        <end position="251"/>
    </location>
</feature>
<feature type="disulfide bond" evidence="1">
    <location>
        <begin position="231"/>
        <end position="243"/>
    </location>
</feature>
<feature type="disulfide bond" evidence="1">
    <location>
        <begin position="299"/>
        <end position="332"/>
    </location>
</feature>
<feature type="disulfide bond" evidence="1">
    <location>
        <begin position="384"/>
        <end position="441"/>
    </location>
</feature>
<feature type="disulfide bond" evidence="1">
    <location>
        <begin position="391"/>
        <end position="414"/>
    </location>
</feature>
<feature type="strand" evidence="4">
    <location>
        <begin position="42"/>
        <end position="44"/>
    </location>
</feature>
<feature type="strand" evidence="4">
    <location>
        <begin position="65"/>
        <end position="69"/>
    </location>
</feature>
<feature type="strand" evidence="4">
    <location>
        <begin position="72"/>
        <end position="78"/>
    </location>
</feature>
<feature type="helix" evidence="4">
    <location>
        <begin position="80"/>
        <end position="96"/>
    </location>
</feature>
<feature type="strand" evidence="4">
    <location>
        <begin position="100"/>
        <end position="103"/>
    </location>
</feature>
<feature type="strand" evidence="4">
    <location>
        <begin position="203"/>
        <end position="205"/>
    </location>
</feature>
<feature type="strand" evidence="4">
    <location>
        <begin position="217"/>
        <end position="221"/>
    </location>
</feature>
<feature type="strand" evidence="4">
    <location>
        <begin position="226"/>
        <end position="231"/>
    </location>
</feature>
<feature type="strand" evidence="4">
    <location>
        <begin position="238"/>
        <end position="243"/>
    </location>
</feature>
<feature type="strand" evidence="4">
    <location>
        <begin position="245"/>
        <end position="251"/>
    </location>
</feature>
<feature type="strand" evidence="4">
    <location>
        <begin position="261"/>
        <end position="266"/>
    </location>
</feature>
<feature type="strand" evidence="4">
    <location>
        <begin position="271"/>
        <end position="273"/>
    </location>
</feature>
<feature type="strand" evidence="4">
    <location>
        <begin position="275"/>
        <end position="278"/>
    </location>
</feature>
<feature type="strand" evidence="4">
    <location>
        <begin position="280"/>
        <end position="282"/>
    </location>
</feature>
<feature type="strand" evidence="4">
    <location>
        <begin position="284"/>
        <end position="288"/>
    </location>
</feature>
<feature type="strand" evidence="4">
    <location>
        <begin position="296"/>
        <end position="301"/>
    </location>
</feature>
<feature type="strand" evidence="4">
    <location>
        <begin position="329"/>
        <end position="333"/>
    </location>
</feature>
<feature type="helix" evidence="4">
    <location>
        <begin position="338"/>
        <end position="350"/>
    </location>
</feature>
<feature type="strand" evidence="4">
    <location>
        <begin position="361"/>
        <end position="367"/>
    </location>
</feature>
<feature type="helix" evidence="4">
    <location>
        <begin position="375"/>
        <end position="378"/>
    </location>
</feature>
<feature type="strand" evidence="4">
    <location>
        <begin position="380"/>
        <end position="384"/>
    </location>
</feature>
<feature type="strand" evidence="4">
    <location>
        <begin position="387"/>
        <end position="391"/>
    </location>
</feature>
<feature type="helix" evidence="4">
    <location>
        <begin position="394"/>
        <end position="398"/>
    </location>
</feature>
<feature type="turn" evidence="4">
    <location>
        <begin position="399"/>
        <end position="401"/>
    </location>
</feature>
<feature type="strand" evidence="4">
    <location>
        <begin position="410"/>
        <end position="421"/>
    </location>
</feature>
<feature type="strand" evidence="4">
    <location>
        <begin position="423"/>
        <end position="426"/>
    </location>
</feature>
<feature type="strand" evidence="4">
    <location>
        <begin position="428"/>
        <end position="430"/>
    </location>
</feature>
<feature type="strand" evidence="4">
    <location>
        <begin position="439"/>
        <end position="453"/>
    </location>
</feature>
<feature type="strand" evidence="4">
    <location>
        <begin position="459"/>
        <end position="463"/>
    </location>
</feature>
<feature type="helix" evidence="4">
    <location>
        <begin position="468"/>
        <end position="475"/>
    </location>
</feature>
<feature type="strand" evidence="4">
    <location>
        <begin position="478"/>
        <end position="482"/>
    </location>
</feature>